<keyword id="KW-0238">DNA-binding</keyword>
<keyword id="KW-1185">Reference proteome</keyword>
<keyword id="KW-0678">Repressor</keyword>
<keyword id="KW-0804">Transcription</keyword>
<keyword id="KW-0805">Transcription regulation</keyword>
<evidence type="ECO:0000250" key="1"/>
<evidence type="ECO:0000255" key="2">
    <source>
        <dbReference type="HAMAP-Rule" id="MF_00768"/>
    </source>
</evidence>
<dbReference type="EMBL" id="FM180568">
    <property type="protein sequence ID" value="CAS07823.1"/>
    <property type="molecule type" value="Genomic_DNA"/>
</dbReference>
<dbReference type="RefSeq" id="WP_001313612.1">
    <property type="nucleotide sequence ID" value="NC_011601.1"/>
</dbReference>
<dbReference type="SMR" id="B7UJG6"/>
<dbReference type="KEGG" id="ecg:E2348C_0275"/>
<dbReference type="HOGENOM" id="CLU_069356_15_4_6"/>
<dbReference type="UniPathway" id="UPA00529"/>
<dbReference type="Proteomes" id="UP000008205">
    <property type="component" value="Chromosome"/>
</dbReference>
<dbReference type="GO" id="GO:0003700">
    <property type="term" value="F:DNA-binding transcription factor activity"/>
    <property type="evidence" value="ECO:0007669"/>
    <property type="project" value="UniProtKB-UniRule"/>
</dbReference>
<dbReference type="GO" id="GO:0000976">
    <property type="term" value="F:transcription cis-regulatory region binding"/>
    <property type="evidence" value="ECO:0007669"/>
    <property type="project" value="TreeGrafter"/>
</dbReference>
<dbReference type="GO" id="GO:0019285">
    <property type="term" value="P:glycine betaine biosynthetic process from choline"/>
    <property type="evidence" value="ECO:0007669"/>
    <property type="project" value="UniProtKB-UniRule"/>
</dbReference>
<dbReference type="GO" id="GO:0045892">
    <property type="term" value="P:negative regulation of DNA-templated transcription"/>
    <property type="evidence" value="ECO:0007669"/>
    <property type="project" value="UniProtKB-UniRule"/>
</dbReference>
<dbReference type="FunFam" id="1.10.357.10:FF:000009">
    <property type="entry name" value="HTH-type transcriptional regulator BetI"/>
    <property type="match status" value="1"/>
</dbReference>
<dbReference type="Gene3D" id="1.10.357.10">
    <property type="entry name" value="Tetracycline Repressor, domain 2"/>
    <property type="match status" value="1"/>
</dbReference>
<dbReference type="HAMAP" id="MF_00768">
    <property type="entry name" value="HTH_type_BetI"/>
    <property type="match status" value="1"/>
</dbReference>
<dbReference type="InterPro" id="IPR039538">
    <property type="entry name" value="BetI_C"/>
</dbReference>
<dbReference type="InterPro" id="IPR023772">
    <property type="entry name" value="DNA-bd_HTH_TetR-type_CS"/>
</dbReference>
<dbReference type="InterPro" id="IPR009057">
    <property type="entry name" value="Homeodomain-like_sf"/>
</dbReference>
<dbReference type="InterPro" id="IPR050109">
    <property type="entry name" value="HTH-type_TetR-like_transc_reg"/>
</dbReference>
<dbReference type="InterPro" id="IPR001647">
    <property type="entry name" value="HTH_TetR"/>
</dbReference>
<dbReference type="InterPro" id="IPR036271">
    <property type="entry name" value="Tet_transcr_reg_TetR-rel_C_sf"/>
</dbReference>
<dbReference type="InterPro" id="IPR017757">
    <property type="entry name" value="Tscrpt_rep_BetI"/>
</dbReference>
<dbReference type="NCBIfam" id="TIGR03384">
    <property type="entry name" value="betaine_BetI"/>
    <property type="match status" value="1"/>
</dbReference>
<dbReference type="NCBIfam" id="NF001978">
    <property type="entry name" value="PRK00767.1"/>
    <property type="match status" value="1"/>
</dbReference>
<dbReference type="PANTHER" id="PTHR30055:SF234">
    <property type="entry name" value="HTH-TYPE TRANSCRIPTIONAL REGULATOR BETI"/>
    <property type="match status" value="1"/>
</dbReference>
<dbReference type="PANTHER" id="PTHR30055">
    <property type="entry name" value="HTH-TYPE TRANSCRIPTIONAL REGULATOR RUTR"/>
    <property type="match status" value="1"/>
</dbReference>
<dbReference type="Pfam" id="PF13977">
    <property type="entry name" value="TetR_C_6"/>
    <property type="match status" value="1"/>
</dbReference>
<dbReference type="Pfam" id="PF00440">
    <property type="entry name" value="TetR_N"/>
    <property type="match status" value="1"/>
</dbReference>
<dbReference type="PRINTS" id="PR00455">
    <property type="entry name" value="HTHTETR"/>
</dbReference>
<dbReference type="SUPFAM" id="SSF46689">
    <property type="entry name" value="Homeodomain-like"/>
    <property type="match status" value="1"/>
</dbReference>
<dbReference type="SUPFAM" id="SSF48498">
    <property type="entry name" value="Tetracyclin repressor-like, C-terminal domain"/>
    <property type="match status" value="1"/>
</dbReference>
<dbReference type="PROSITE" id="PS01081">
    <property type="entry name" value="HTH_TETR_1"/>
    <property type="match status" value="1"/>
</dbReference>
<dbReference type="PROSITE" id="PS50977">
    <property type="entry name" value="HTH_TETR_2"/>
    <property type="match status" value="1"/>
</dbReference>
<accession>B7UJG6</accession>
<feature type="chain" id="PRO_1000148445" description="HTH-type transcriptional regulator BetI">
    <location>
        <begin position="1"/>
        <end position="195"/>
    </location>
</feature>
<feature type="domain" description="HTH tetR-type" evidence="2">
    <location>
        <begin position="8"/>
        <end position="68"/>
    </location>
</feature>
<feature type="DNA-binding region" description="H-T-H motif" evidence="2">
    <location>
        <begin position="31"/>
        <end position="50"/>
    </location>
</feature>
<name>BETI_ECO27</name>
<reference key="1">
    <citation type="journal article" date="2009" name="J. Bacteriol.">
        <title>Complete genome sequence and comparative genome analysis of enteropathogenic Escherichia coli O127:H6 strain E2348/69.</title>
        <authorList>
            <person name="Iguchi A."/>
            <person name="Thomson N.R."/>
            <person name="Ogura Y."/>
            <person name="Saunders D."/>
            <person name="Ooka T."/>
            <person name="Henderson I.R."/>
            <person name="Harris D."/>
            <person name="Asadulghani M."/>
            <person name="Kurokawa K."/>
            <person name="Dean P."/>
            <person name="Kenny B."/>
            <person name="Quail M.A."/>
            <person name="Thurston S."/>
            <person name="Dougan G."/>
            <person name="Hayashi T."/>
            <person name="Parkhill J."/>
            <person name="Frankel G."/>
        </authorList>
    </citation>
    <scope>NUCLEOTIDE SEQUENCE [LARGE SCALE GENOMIC DNA]</scope>
    <source>
        <strain>E2348/69 / EPEC</strain>
    </source>
</reference>
<organism>
    <name type="scientific">Escherichia coli O127:H6 (strain E2348/69 / EPEC)</name>
    <dbReference type="NCBI Taxonomy" id="574521"/>
    <lineage>
        <taxon>Bacteria</taxon>
        <taxon>Pseudomonadati</taxon>
        <taxon>Pseudomonadota</taxon>
        <taxon>Gammaproteobacteria</taxon>
        <taxon>Enterobacterales</taxon>
        <taxon>Enterobacteriaceae</taxon>
        <taxon>Escherichia</taxon>
    </lineage>
</organism>
<proteinExistence type="inferred from homology"/>
<protein>
    <recommendedName>
        <fullName evidence="2">HTH-type transcriptional regulator BetI</fullName>
    </recommendedName>
</protein>
<comment type="function">
    <text evidence="1">Repressor involved in the biosynthesis of the osmoprotectant glycine betaine. It represses transcription of the choline transporter BetT and the genes of BetAB involved in the synthesis of glycine betaine (By similarity).</text>
</comment>
<comment type="pathway">
    <text>Amine and polyamine biosynthesis; betaine biosynthesis via choline pathway [regulation].</text>
</comment>
<sequence>MPKLGMQSIRRRQLIDATLEAINEVGMHDATIAQIARRAGVSTGIISHYFRDKNGLLEATMRDITSQLRDAVLNRLHALPQGSAERRLQAIVGGNFDETQVSSAAMKAWLAFWASSMHQPMLYRLQQVSSRRLLSNLVSEFRRELPRQQAQEAGYGLAALIDGLWLRAALSGKPLDKPLAHSLTRHFITQHLPTD</sequence>
<gene>
    <name evidence="2" type="primary">betI</name>
    <name type="ordered locus">E2348C_0275</name>
</gene>